<name>GCH4_STAAT</name>
<evidence type="ECO:0000255" key="1">
    <source>
        <dbReference type="HAMAP-Rule" id="MF_01527"/>
    </source>
</evidence>
<feature type="chain" id="PRO_1000087584" description="GTP cyclohydrolase FolE2">
    <location>
        <begin position="1"/>
        <end position="292"/>
    </location>
</feature>
<feature type="site" description="May be catalytically important" evidence="1">
    <location>
        <position position="176"/>
    </location>
</feature>
<organism>
    <name type="scientific">Staphylococcus aureus (strain USA300 / TCH1516)</name>
    <dbReference type="NCBI Taxonomy" id="451516"/>
    <lineage>
        <taxon>Bacteria</taxon>
        <taxon>Bacillati</taxon>
        <taxon>Bacillota</taxon>
        <taxon>Bacilli</taxon>
        <taxon>Bacillales</taxon>
        <taxon>Staphylococcaceae</taxon>
        <taxon>Staphylococcus</taxon>
    </lineage>
</organism>
<keyword id="KW-0378">Hydrolase</keyword>
<proteinExistence type="inferred from homology"/>
<sequence length="292" mass="33482">MTEFDLSTREGRWKHFGSVDPIEGTKPTTKNEMTDLQSTHKDFLFEIEEVGIKNLVYPVLVDQYQTAGTFSFSTSLTKDEKGINMSRIIESVEKHYDNGIELEFNTLYQVLRTLQTNMKQNAAGVDVSGKWFFDRYSPTTNIKAVGNADVTYGLAIDGDKVTRKELTIEATVTTLCPCSKEISEYSAHNQRGVVTVKTYINKDQDIVDDYKNKILDAMEANASSILYPILKRPDEKRVTERAYENPRFVEDLIRLIAADLVEFDWLDGFDIECRNEESIHQHDAFAKLKYRK</sequence>
<reference key="1">
    <citation type="journal article" date="2007" name="BMC Microbiol.">
        <title>Subtle genetic changes enhance virulence of methicillin resistant and sensitive Staphylococcus aureus.</title>
        <authorList>
            <person name="Highlander S.K."/>
            <person name="Hulten K.G."/>
            <person name="Qin X."/>
            <person name="Jiang H."/>
            <person name="Yerrapragada S."/>
            <person name="Mason E.O. Jr."/>
            <person name="Shang Y."/>
            <person name="Williams T.M."/>
            <person name="Fortunov R.M."/>
            <person name="Liu Y."/>
            <person name="Igboeli O."/>
            <person name="Petrosino J."/>
            <person name="Tirumalai M."/>
            <person name="Uzman A."/>
            <person name="Fox G.E."/>
            <person name="Cardenas A.M."/>
            <person name="Muzny D.M."/>
            <person name="Hemphill L."/>
            <person name="Ding Y."/>
            <person name="Dugan S."/>
            <person name="Blyth P.R."/>
            <person name="Buhay C.J."/>
            <person name="Dinh H.H."/>
            <person name="Hawes A.C."/>
            <person name="Holder M."/>
            <person name="Kovar C.L."/>
            <person name="Lee S.L."/>
            <person name="Liu W."/>
            <person name="Nazareth L.V."/>
            <person name="Wang Q."/>
            <person name="Zhou J."/>
            <person name="Kaplan S.L."/>
            <person name="Weinstock G.M."/>
        </authorList>
    </citation>
    <scope>NUCLEOTIDE SEQUENCE [LARGE SCALE GENOMIC DNA]</scope>
    <source>
        <strain>USA300 / TCH1516</strain>
    </source>
</reference>
<protein>
    <recommendedName>
        <fullName evidence="1">GTP cyclohydrolase FolE2</fullName>
        <ecNumber evidence="1">3.5.4.16</ecNumber>
    </recommendedName>
</protein>
<comment type="function">
    <text evidence="1">Converts GTP to 7,8-dihydroneopterin triphosphate.</text>
</comment>
<comment type="catalytic activity">
    <reaction evidence="1">
        <text>GTP + H2O = 7,8-dihydroneopterin 3'-triphosphate + formate + H(+)</text>
        <dbReference type="Rhea" id="RHEA:17473"/>
        <dbReference type="ChEBI" id="CHEBI:15377"/>
        <dbReference type="ChEBI" id="CHEBI:15378"/>
        <dbReference type="ChEBI" id="CHEBI:15740"/>
        <dbReference type="ChEBI" id="CHEBI:37565"/>
        <dbReference type="ChEBI" id="CHEBI:58462"/>
        <dbReference type="EC" id="3.5.4.16"/>
    </reaction>
</comment>
<comment type="pathway">
    <text evidence="1">Cofactor biosynthesis; 7,8-dihydroneopterin triphosphate biosynthesis; 7,8-dihydroneopterin triphosphate from GTP: step 1/1.</text>
</comment>
<comment type="similarity">
    <text evidence="1">Belongs to the GTP cyclohydrolase IV family.</text>
</comment>
<dbReference type="EC" id="3.5.4.16" evidence="1"/>
<dbReference type="EMBL" id="CP000730">
    <property type="protein sequence ID" value="ABX28586.1"/>
    <property type="molecule type" value="Genomic_DNA"/>
</dbReference>
<dbReference type="RefSeq" id="WP_000134232.1">
    <property type="nucleotide sequence ID" value="NC_010079.1"/>
</dbReference>
<dbReference type="SMR" id="A8YZR4"/>
<dbReference type="KEGG" id="sax:USA300HOU_0560"/>
<dbReference type="HOGENOM" id="CLU_062816_1_1_9"/>
<dbReference type="UniPathway" id="UPA00848">
    <property type="reaction ID" value="UER00151"/>
</dbReference>
<dbReference type="GO" id="GO:0003934">
    <property type="term" value="F:GTP cyclohydrolase I activity"/>
    <property type="evidence" value="ECO:0007669"/>
    <property type="project" value="UniProtKB-UniRule"/>
</dbReference>
<dbReference type="GO" id="GO:0046654">
    <property type="term" value="P:tetrahydrofolate biosynthetic process"/>
    <property type="evidence" value="ECO:0007669"/>
    <property type="project" value="UniProtKB-UniRule"/>
</dbReference>
<dbReference type="Gene3D" id="3.10.270.10">
    <property type="entry name" value="Urate Oxidase"/>
    <property type="match status" value="1"/>
</dbReference>
<dbReference type="HAMAP" id="MF_01527_B">
    <property type="entry name" value="GTP_cyclohydrol_B"/>
    <property type="match status" value="1"/>
</dbReference>
<dbReference type="InterPro" id="IPR022838">
    <property type="entry name" value="GTP_cyclohydrolase_FolE2"/>
</dbReference>
<dbReference type="InterPro" id="IPR003801">
    <property type="entry name" value="GTP_cyclohydrolase_FolE2/MptA"/>
</dbReference>
<dbReference type="NCBIfam" id="NF010200">
    <property type="entry name" value="PRK13674.1-1"/>
    <property type="match status" value="1"/>
</dbReference>
<dbReference type="PANTHER" id="PTHR36445">
    <property type="entry name" value="GTP CYCLOHYDROLASE MPTA"/>
    <property type="match status" value="1"/>
</dbReference>
<dbReference type="PANTHER" id="PTHR36445:SF1">
    <property type="entry name" value="GTP CYCLOHYDROLASE MPTA"/>
    <property type="match status" value="1"/>
</dbReference>
<dbReference type="Pfam" id="PF02649">
    <property type="entry name" value="GCHY-1"/>
    <property type="match status" value="1"/>
</dbReference>
<gene>
    <name evidence="1" type="primary">folE2</name>
    <name type="ordered locus">USA300HOU_0560</name>
</gene>
<accession>A8YZR4</accession>